<evidence type="ECO:0000255" key="1">
    <source>
        <dbReference type="HAMAP-Rule" id="MF_00375"/>
    </source>
</evidence>
<sequence length="428" mass="45841">MTRSDELFEQAKKTIPGGVNSPVRAFNGVGGSPRFIEKADGAYIYDADGKAYIDYVGSWGPMILGHNHPKIREAVLAAVENGLSFGAPTELEVTMAEKVIEMVPSMEQVRMVSSGTEATMSAIRLARGFTSRDKILKFEGCYHGHADCLLVKAGSGALTLGQPSSPGIPEDFAKHTLTATYNDLESVKALFEQYPEEISCIILEPVAGNMNCIPPVEGFLQGLRAICDQYGALMIIDEVMTGFRVSKSGAQGHYGVTPDLTTLGKVIGGGMPVGAFGGRKDVMQFIAPTGPVYQAGTLSGNPIAMSAGLAQMDALCEEGVYEELAAKTKRIAEGFKAAANKHGIPMSINYVGGMFGLFFTEEEKVTSFEQVTKCDADKFPEFYHGMLDEGVYLAPSAYEAGFLSMAHGEKELEETLAAADRVFAKMAK</sequence>
<keyword id="KW-0963">Cytoplasm</keyword>
<keyword id="KW-0413">Isomerase</keyword>
<keyword id="KW-0627">Porphyrin biosynthesis</keyword>
<keyword id="KW-0663">Pyridoxal phosphate</keyword>
<keyword id="KW-1185">Reference proteome</keyword>
<feature type="chain" id="PRO_1000079935" description="Glutamate-1-semialdehyde 2,1-aminomutase">
    <location>
        <begin position="1"/>
        <end position="428"/>
    </location>
</feature>
<feature type="modified residue" description="N6-(pyridoxal phosphate)lysine" evidence="1">
    <location>
        <position position="265"/>
    </location>
</feature>
<protein>
    <recommendedName>
        <fullName evidence="1">Glutamate-1-semialdehyde 2,1-aminomutase</fullName>
        <shortName evidence="1">GSA</shortName>
        <ecNumber evidence="1">5.4.3.8</ecNumber>
    </recommendedName>
    <alternativeName>
        <fullName evidence="1">Glutamate-1-semialdehyde aminotransferase</fullName>
        <shortName evidence="1">GSA-AT</shortName>
    </alternativeName>
</protein>
<reference key="1">
    <citation type="submission" date="2007-08" db="EMBL/GenBank/DDBJ databases">
        <title>Complete sequence of Shewanella sediminis HAW-EB3.</title>
        <authorList>
            <consortium name="US DOE Joint Genome Institute"/>
            <person name="Copeland A."/>
            <person name="Lucas S."/>
            <person name="Lapidus A."/>
            <person name="Barry K."/>
            <person name="Glavina del Rio T."/>
            <person name="Dalin E."/>
            <person name="Tice H."/>
            <person name="Pitluck S."/>
            <person name="Chertkov O."/>
            <person name="Brettin T."/>
            <person name="Bruce D."/>
            <person name="Detter J.C."/>
            <person name="Han C."/>
            <person name="Schmutz J."/>
            <person name="Larimer F."/>
            <person name="Land M."/>
            <person name="Hauser L."/>
            <person name="Kyrpides N."/>
            <person name="Kim E."/>
            <person name="Zhao J.-S."/>
            <person name="Richardson P."/>
        </authorList>
    </citation>
    <scope>NUCLEOTIDE SEQUENCE [LARGE SCALE GENOMIC DNA]</scope>
    <source>
        <strain>HAW-EB3</strain>
    </source>
</reference>
<proteinExistence type="inferred from homology"/>
<dbReference type="EC" id="5.4.3.8" evidence="1"/>
<dbReference type="EMBL" id="CP000821">
    <property type="protein sequence ID" value="ABV35699.1"/>
    <property type="molecule type" value="Genomic_DNA"/>
</dbReference>
<dbReference type="RefSeq" id="WP_012141435.1">
    <property type="nucleotide sequence ID" value="NC_009831.1"/>
</dbReference>
<dbReference type="SMR" id="A8FS76"/>
<dbReference type="STRING" id="425104.Ssed_1088"/>
<dbReference type="KEGG" id="sse:Ssed_1088"/>
<dbReference type="eggNOG" id="COG0001">
    <property type="taxonomic scope" value="Bacteria"/>
</dbReference>
<dbReference type="HOGENOM" id="CLU_016922_1_5_6"/>
<dbReference type="OrthoDB" id="9801052at2"/>
<dbReference type="UniPathway" id="UPA00251">
    <property type="reaction ID" value="UER00317"/>
</dbReference>
<dbReference type="Proteomes" id="UP000002015">
    <property type="component" value="Chromosome"/>
</dbReference>
<dbReference type="GO" id="GO:0005737">
    <property type="term" value="C:cytoplasm"/>
    <property type="evidence" value="ECO:0007669"/>
    <property type="project" value="UniProtKB-SubCell"/>
</dbReference>
<dbReference type="GO" id="GO:0042286">
    <property type="term" value="F:glutamate-1-semialdehyde 2,1-aminomutase activity"/>
    <property type="evidence" value="ECO:0007669"/>
    <property type="project" value="UniProtKB-UniRule"/>
</dbReference>
<dbReference type="GO" id="GO:0030170">
    <property type="term" value="F:pyridoxal phosphate binding"/>
    <property type="evidence" value="ECO:0007669"/>
    <property type="project" value="InterPro"/>
</dbReference>
<dbReference type="GO" id="GO:0008483">
    <property type="term" value="F:transaminase activity"/>
    <property type="evidence" value="ECO:0007669"/>
    <property type="project" value="InterPro"/>
</dbReference>
<dbReference type="GO" id="GO:0006782">
    <property type="term" value="P:protoporphyrinogen IX biosynthetic process"/>
    <property type="evidence" value="ECO:0007669"/>
    <property type="project" value="UniProtKB-UniRule"/>
</dbReference>
<dbReference type="CDD" id="cd00610">
    <property type="entry name" value="OAT_like"/>
    <property type="match status" value="1"/>
</dbReference>
<dbReference type="FunFam" id="3.40.640.10:FF:000021">
    <property type="entry name" value="Glutamate-1-semialdehyde 2,1-aminomutase"/>
    <property type="match status" value="1"/>
</dbReference>
<dbReference type="FunFam" id="3.90.1150.10:FF:000012">
    <property type="entry name" value="Glutamate-1-semialdehyde 2,1-aminomutase"/>
    <property type="match status" value="1"/>
</dbReference>
<dbReference type="Gene3D" id="3.90.1150.10">
    <property type="entry name" value="Aspartate Aminotransferase, domain 1"/>
    <property type="match status" value="1"/>
</dbReference>
<dbReference type="Gene3D" id="3.40.640.10">
    <property type="entry name" value="Type I PLP-dependent aspartate aminotransferase-like (Major domain)"/>
    <property type="match status" value="1"/>
</dbReference>
<dbReference type="HAMAP" id="MF_00375">
    <property type="entry name" value="HemL_aminotrans_3"/>
    <property type="match status" value="1"/>
</dbReference>
<dbReference type="InterPro" id="IPR004639">
    <property type="entry name" value="4pyrrol_synth_GluAld_NH2Trfase"/>
</dbReference>
<dbReference type="InterPro" id="IPR005814">
    <property type="entry name" value="Aminotrans_3"/>
</dbReference>
<dbReference type="InterPro" id="IPR049704">
    <property type="entry name" value="Aminotrans_3_PPA_site"/>
</dbReference>
<dbReference type="InterPro" id="IPR015424">
    <property type="entry name" value="PyrdxlP-dep_Trfase"/>
</dbReference>
<dbReference type="InterPro" id="IPR015421">
    <property type="entry name" value="PyrdxlP-dep_Trfase_major"/>
</dbReference>
<dbReference type="InterPro" id="IPR015422">
    <property type="entry name" value="PyrdxlP-dep_Trfase_small"/>
</dbReference>
<dbReference type="NCBIfam" id="TIGR00713">
    <property type="entry name" value="hemL"/>
    <property type="match status" value="1"/>
</dbReference>
<dbReference type="NCBIfam" id="NF000818">
    <property type="entry name" value="PRK00062.1"/>
    <property type="match status" value="1"/>
</dbReference>
<dbReference type="PANTHER" id="PTHR43713">
    <property type="entry name" value="GLUTAMATE-1-SEMIALDEHYDE 2,1-AMINOMUTASE"/>
    <property type="match status" value="1"/>
</dbReference>
<dbReference type="PANTHER" id="PTHR43713:SF3">
    <property type="entry name" value="GLUTAMATE-1-SEMIALDEHYDE 2,1-AMINOMUTASE 1, CHLOROPLASTIC-RELATED"/>
    <property type="match status" value="1"/>
</dbReference>
<dbReference type="Pfam" id="PF00202">
    <property type="entry name" value="Aminotran_3"/>
    <property type="match status" value="1"/>
</dbReference>
<dbReference type="SUPFAM" id="SSF53383">
    <property type="entry name" value="PLP-dependent transferases"/>
    <property type="match status" value="1"/>
</dbReference>
<dbReference type="PROSITE" id="PS00600">
    <property type="entry name" value="AA_TRANSFER_CLASS_3"/>
    <property type="match status" value="1"/>
</dbReference>
<name>GSA_SHESH</name>
<gene>
    <name evidence="1" type="primary">hemL</name>
    <name type="ordered locus">Ssed_1088</name>
</gene>
<organism>
    <name type="scientific">Shewanella sediminis (strain HAW-EB3)</name>
    <dbReference type="NCBI Taxonomy" id="425104"/>
    <lineage>
        <taxon>Bacteria</taxon>
        <taxon>Pseudomonadati</taxon>
        <taxon>Pseudomonadota</taxon>
        <taxon>Gammaproteobacteria</taxon>
        <taxon>Alteromonadales</taxon>
        <taxon>Shewanellaceae</taxon>
        <taxon>Shewanella</taxon>
    </lineage>
</organism>
<comment type="catalytic activity">
    <reaction evidence="1">
        <text>(S)-4-amino-5-oxopentanoate = 5-aminolevulinate</text>
        <dbReference type="Rhea" id="RHEA:14265"/>
        <dbReference type="ChEBI" id="CHEBI:57501"/>
        <dbReference type="ChEBI" id="CHEBI:356416"/>
        <dbReference type="EC" id="5.4.3.8"/>
    </reaction>
</comment>
<comment type="cofactor">
    <cofactor evidence="1">
        <name>pyridoxal 5'-phosphate</name>
        <dbReference type="ChEBI" id="CHEBI:597326"/>
    </cofactor>
</comment>
<comment type="pathway">
    <text evidence="1">Porphyrin-containing compound metabolism; protoporphyrin-IX biosynthesis; 5-aminolevulinate from L-glutamyl-tRNA(Glu): step 2/2.</text>
</comment>
<comment type="subunit">
    <text evidence="1">Homodimer.</text>
</comment>
<comment type="subcellular location">
    <subcellularLocation>
        <location evidence="1">Cytoplasm</location>
    </subcellularLocation>
</comment>
<comment type="similarity">
    <text evidence="1">Belongs to the class-III pyridoxal-phosphate-dependent aminotransferase family. HemL subfamily.</text>
</comment>
<accession>A8FS76</accession>